<accession>Q8A2N7</accession>
<dbReference type="EMBL" id="AE015928">
    <property type="protein sequence ID" value="AAO78374.1"/>
    <property type="molecule type" value="Genomic_DNA"/>
</dbReference>
<dbReference type="RefSeq" id="NP_812180.1">
    <property type="nucleotide sequence ID" value="NC_004663.1"/>
</dbReference>
<dbReference type="RefSeq" id="WP_008762875.1">
    <property type="nucleotide sequence ID" value="NC_004663.1"/>
</dbReference>
<dbReference type="SMR" id="Q8A2N7"/>
<dbReference type="FunCoup" id="Q8A2N7">
    <property type="interactions" value="562"/>
</dbReference>
<dbReference type="STRING" id="226186.BT_3268"/>
<dbReference type="PaxDb" id="226186-BT_3268"/>
<dbReference type="EnsemblBacteria" id="AAO78374">
    <property type="protein sequence ID" value="AAO78374"/>
    <property type="gene ID" value="BT_3268"/>
</dbReference>
<dbReference type="GeneID" id="60924448"/>
<dbReference type="KEGG" id="bth:BT_3268"/>
<dbReference type="PATRIC" id="fig|226186.12.peg.3333"/>
<dbReference type="eggNOG" id="COG0445">
    <property type="taxonomic scope" value="Bacteria"/>
</dbReference>
<dbReference type="HOGENOM" id="CLU_007831_2_2_10"/>
<dbReference type="InParanoid" id="Q8A2N7"/>
<dbReference type="OrthoDB" id="9815560at2"/>
<dbReference type="Proteomes" id="UP000001414">
    <property type="component" value="Chromosome"/>
</dbReference>
<dbReference type="GO" id="GO:0005829">
    <property type="term" value="C:cytosol"/>
    <property type="evidence" value="ECO:0000318"/>
    <property type="project" value="GO_Central"/>
</dbReference>
<dbReference type="GO" id="GO:0050660">
    <property type="term" value="F:flavin adenine dinucleotide binding"/>
    <property type="evidence" value="ECO:0000318"/>
    <property type="project" value="GO_Central"/>
</dbReference>
<dbReference type="GO" id="GO:0030488">
    <property type="term" value="P:tRNA methylation"/>
    <property type="evidence" value="ECO:0000318"/>
    <property type="project" value="GO_Central"/>
</dbReference>
<dbReference type="GO" id="GO:0002098">
    <property type="term" value="P:tRNA wobble uridine modification"/>
    <property type="evidence" value="ECO:0000318"/>
    <property type="project" value="GO_Central"/>
</dbReference>
<dbReference type="FunFam" id="1.10.10.1800:FF:000003">
    <property type="entry name" value="tRNA uridine 5-carboxymethylaminomethyl modification enzyme MnmG"/>
    <property type="match status" value="1"/>
</dbReference>
<dbReference type="FunFam" id="1.10.150.570:FF:000001">
    <property type="entry name" value="tRNA uridine 5-carboxymethylaminomethyl modification enzyme MnmG"/>
    <property type="match status" value="1"/>
</dbReference>
<dbReference type="FunFam" id="3.50.50.60:FF:000002">
    <property type="entry name" value="tRNA uridine 5-carboxymethylaminomethyl modification enzyme MnmG"/>
    <property type="match status" value="1"/>
</dbReference>
<dbReference type="FunFam" id="3.50.50.60:FF:000010">
    <property type="entry name" value="tRNA uridine 5-carboxymethylaminomethyl modification enzyme MnmG"/>
    <property type="match status" value="1"/>
</dbReference>
<dbReference type="Gene3D" id="3.50.50.60">
    <property type="entry name" value="FAD/NAD(P)-binding domain"/>
    <property type="match status" value="2"/>
</dbReference>
<dbReference type="Gene3D" id="1.10.150.570">
    <property type="entry name" value="GidA associated domain, C-terminal subdomain"/>
    <property type="match status" value="1"/>
</dbReference>
<dbReference type="Gene3D" id="1.10.10.1800">
    <property type="entry name" value="tRNA uridine 5-carboxymethylaminomethyl modification enzyme MnmG/GidA"/>
    <property type="match status" value="1"/>
</dbReference>
<dbReference type="HAMAP" id="MF_00129">
    <property type="entry name" value="MnmG_GidA"/>
    <property type="match status" value="1"/>
</dbReference>
<dbReference type="InterPro" id="IPR036188">
    <property type="entry name" value="FAD/NAD-bd_sf"/>
</dbReference>
<dbReference type="InterPro" id="IPR049312">
    <property type="entry name" value="GIDA_C_N"/>
</dbReference>
<dbReference type="InterPro" id="IPR004416">
    <property type="entry name" value="MnmG"/>
</dbReference>
<dbReference type="InterPro" id="IPR002218">
    <property type="entry name" value="MnmG-rel"/>
</dbReference>
<dbReference type="InterPro" id="IPR020595">
    <property type="entry name" value="MnmG-rel_CS"/>
</dbReference>
<dbReference type="InterPro" id="IPR026904">
    <property type="entry name" value="MnmG_C"/>
</dbReference>
<dbReference type="InterPro" id="IPR047001">
    <property type="entry name" value="MnmG_C_subdom"/>
</dbReference>
<dbReference type="InterPro" id="IPR044920">
    <property type="entry name" value="MnmG_C_subdom_sf"/>
</dbReference>
<dbReference type="InterPro" id="IPR040131">
    <property type="entry name" value="MnmG_N"/>
</dbReference>
<dbReference type="NCBIfam" id="TIGR00136">
    <property type="entry name" value="mnmG_gidA"/>
    <property type="match status" value="1"/>
</dbReference>
<dbReference type="PANTHER" id="PTHR11806">
    <property type="entry name" value="GLUCOSE INHIBITED DIVISION PROTEIN A"/>
    <property type="match status" value="1"/>
</dbReference>
<dbReference type="PANTHER" id="PTHR11806:SF0">
    <property type="entry name" value="PROTEIN MTO1 HOMOLOG, MITOCHONDRIAL"/>
    <property type="match status" value="1"/>
</dbReference>
<dbReference type="Pfam" id="PF01134">
    <property type="entry name" value="GIDA"/>
    <property type="match status" value="1"/>
</dbReference>
<dbReference type="Pfam" id="PF21680">
    <property type="entry name" value="GIDA_C_1st"/>
    <property type="match status" value="1"/>
</dbReference>
<dbReference type="Pfam" id="PF13932">
    <property type="entry name" value="SAM_GIDA_C"/>
    <property type="match status" value="1"/>
</dbReference>
<dbReference type="SMART" id="SM01228">
    <property type="entry name" value="GIDA_assoc_3"/>
    <property type="match status" value="1"/>
</dbReference>
<dbReference type="SUPFAM" id="SSF51905">
    <property type="entry name" value="FAD/NAD(P)-binding domain"/>
    <property type="match status" value="1"/>
</dbReference>
<dbReference type="PROSITE" id="PS01280">
    <property type="entry name" value="GIDA_1"/>
    <property type="match status" value="1"/>
</dbReference>
<dbReference type="PROSITE" id="PS01281">
    <property type="entry name" value="GIDA_2"/>
    <property type="match status" value="1"/>
</dbReference>
<proteinExistence type="inferred from homology"/>
<organism>
    <name type="scientific">Bacteroides thetaiotaomicron (strain ATCC 29148 / DSM 2079 / JCM 5827 / CCUG 10774 / NCTC 10582 / VPI-5482 / E50)</name>
    <dbReference type="NCBI Taxonomy" id="226186"/>
    <lineage>
        <taxon>Bacteria</taxon>
        <taxon>Pseudomonadati</taxon>
        <taxon>Bacteroidota</taxon>
        <taxon>Bacteroidia</taxon>
        <taxon>Bacteroidales</taxon>
        <taxon>Bacteroidaceae</taxon>
        <taxon>Bacteroides</taxon>
    </lineage>
</organism>
<reference key="1">
    <citation type="journal article" date="2003" name="Science">
        <title>A genomic view of the human-Bacteroides thetaiotaomicron symbiosis.</title>
        <authorList>
            <person name="Xu J."/>
            <person name="Bjursell M.K."/>
            <person name="Himrod J."/>
            <person name="Deng S."/>
            <person name="Carmichael L.K."/>
            <person name="Chiang H.C."/>
            <person name="Hooper L.V."/>
            <person name="Gordon J.I."/>
        </authorList>
    </citation>
    <scope>NUCLEOTIDE SEQUENCE [LARGE SCALE GENOMIC DNA]</scope>
    <source>
        <strain>ATCC 29148 / DSM 2079 / JCM 5827 / CCUG 10774 / NCTC 10582 / VPI-5482 / E50</strain>
    </source>
</reference>
<protein>
    <recommendedName>
        <fullName evidence="1">tRNA uridine 5-carboxymethylaminomethyl modification enzyme MnmG</fullName>
    </recommendedName>
    <alternativeName>
        <fullName evidence="1">Glucose-inhibited division protein A</fullName>
    </alternativeName>
</protein>
<evidence type="ECO:0000255" key="1">
    <source>
        <dbReference type="HAMAP-Rule" id="MF_00129"/>
    </source>
</evidence>
<gene>
    <name evidence="1" type="primary">mnmG</name>
    <name evidence="1" type="synonym">gidA</name>
    <name type="ordered locus">BT_3268</name>
</gene>
<feature type="chain" id="PRO_0000117058" description="tRNA uridine 5-carboxymethylaminomethyl modification enzyme MnmG">
    <location>
        <begin position="1"/>
        <end position="628"/>
    </location>
</feature>
<feature type="binding site" evidence="1">
    <location>
        <begin position="11"/>
        <end position="16"/>
    </location>
    <ligand>
        <name>FAD</name>
        <dbReference type="ChEBI" id="CHEBI:57692"/>
    </ligand>
</feature>
<feature type="binding site" evidence="1">
    <location>
        <position position="123"/>
    </location>
    <ligand>
        <name>FAD</name>
        <dbReference type="ChEBI" id="CHEBI:57692"/>
    </ligand>
</feature>
<feature type="binding site" evidence="1">
    <location>
        <position position="178"/>
    </location>
    <ligand>
        <name>FAD</name>
        <dbReference type="ChEBI" id="CHEBI:57692"/>
    </ligand>
</feature>
<feature type="binding site" evidence="1">
    <location>
        <begin position="271"/>
        <end position="285"/>
    </location>
    <ligand>
        <name>NAD(+)</name>
        <dbReference type="ChEBI" id="CHEBI:57540"/>
    </ligand>
</feature>
<feature type="binding site" evidence="1">
    <location>
        <position position="368"/>
    </location>
    <ligand>
        <name>FAD</name>
        <dbReference type="ChEBI" id="CHEBI:57692"/>
    </ligand>
</feature>
<keyword id="KW-0963">Cytoplasm</keyword>
<keyword id="KW-0274">FAD</keyword>
<keyword id="KW-0285">Flavoprotein</keyword>
<keyword id="KW-0520">NAD</keyword>
<keyword id="KW-1185">Reference proteome</keyword>
<keyword id="KW-0819">tRNA processing</keyword>
<sequence length="628" mass="70257">MDFKYDVIVIGAGHAGCEAAAAAANLGSKTCLITMDMNKIGQMSCNPAVGGIAKGQIVREIDALGGQMGLVTDETAIQFRILNRSKGPAMWSPRAQCDRAKFIWSWREKLENTPNLHIWQDTVCELLVENGEVVGLVTLWGVTFKAKCIVLTAGTFLNGLMHVGRHQLPGGRMAEPASYQLTESIARHGIAYGRMKTGTPVRIDARSIHFDLMDTQDGECDFHKFSFMNTSTRHLKQLQCWTCYTNEEVHRILREGLPDSPLFNGQIQSIGPRYCPSIETKIVTFPDKEQHQLFLEPEGETTQELYLNGFSSSLPMDIQIAALKKVPAFKDIVIYRPGYAIEYDYFDPTQLKHSLESKIIKNLFFAGQVNGTTGYEEAGGQGLIAGINAHINCHGGEAFTLARDEAYIGVLIDDLVTKGVDEPYRMFTSRAEYRILLRMDDADMRLTERAYHLGLAREDRYQLMKTKKEALEQIVNFAKNYSMKPALINDALEKLGTTPLRQGCKLIEILNRPQITIENIAEHVPAFQRELEKATAADSDRKEEILEAAEILIKYQGYIDRERMIAEKLARLESIKIKGKFDYASIQSLSTEARQKLVKIDPETIAQASRIPGVSPSDINVLLVLSGR</sequence>
<name>MNMG_BACTN</name>
<comment type="function">
    <text evidence="1">NAD-binding protein involved in the addition of a carboxymethylaminomethyl (cmnm) group at the wobble position (U34) of certain tRNAs, forming tRNA-cmnm(5)s(2)U34.</text>
</comment>
<comment type="cofactor">
    <cofactor evidence="1">
        <name>FAD</name>
        <dbReference type="ChEBI" id="CHEBI:57692"/>
    </cofactor>
</comment>
<comment type="subunit">
    <text evidence="1">Homodimer. Heterotetramer of two MnmE and two MnmG subunits.</text>
</comment>
<comment type="subcellular location">
    <subcellularLocation>
        <location evidence="1">Cytoplasm</location>
    </subcellularLocation>
</comment>
<comment type="similarity">
    <text evidence="1">Belongs to the MnmG family.</text>
</comment>